<dbReference type="EC" id="5.1.1.1" evidence="1"/>
<dbReference type="EMBL" id="CP000480">
    <property type="protein sequence ID" value="ABK74582.1"/>
    <property type="molecule type" value="Genomic_DNA"/>
</dbReference>
<dbReference type="EMBL" id="CP001663">
    <property type="protein sequence ID" value="AFP38010.1"/>
    <property type="molecule type" value="Genomic_DNA"/>
</dbReference>
<dbReference type="RefSeq" id="WP_011727747.1">
    <property type="nucleotide sequence ID" value="NZ_SIJM01000016.1"/>
</dbReference>
<dbReference type="RefSeq" id="YP_885954.1">
    <property type="nucleotide sequence ID" value="NC_008596.1"/>
</dbReference>
<dbReference type="SMR" id="A0QSR6"/>
<dbReference type="STRING" id="246196.MSMEG_1575"/>
<dbReference type="PaxDb" id="246196-MSMEI_1537"/>
<dbReference type="GeneID" id="93456414"/>
<dbReference type="KEGG" id="msb:LJ00_07865"/>
<dbReference type="KEGG" id="msg:MSMEI_1537"/>
<dbReference type="KEGG" id="msm:MSMEG_1575"/>
<dbReference type="PATRIC" id="fig|246196.19.peg.1561"/>
<dbReference type="eggNOG" id="COG0787">
    <property type="taxonomic scope" value="Bacteria"/>
</dbReference>
<dbReference type="OrthoDB" id="9813814at2"/>
<dbReference type="UniPathway" id="UPA00042">
    <property type="reaction ID" value="UER00497"/>
</dbReference>
<dbReference type="Proteomes" id="UP000000757">
    <property type="component" value="Chromosome"/>
</dbReference>
<dbReference type="Proteomes" id="UP000006158">
    <property type="component" value="Chromosome"/>
</dbReference>
<dbReference type="GO" id="GO:0005829">
    <property type="term" value="C:cytosol"/>
    <property type="evidence" value="ECO:0007669"/>
    <property type="project" value="TreeGrafter"/>
</dbReference>
<dbReference type="GO" id="GO:0008784">
    <property type="term" value="F:alanine racemase activity"/>
    <property type="evidence" value="ECO:0007669"/>
    <property type="project" value="UniProtKB-UniRule"/>
</dbReference>
<dbReference type="GO" id="GO:0030170">
    <property type="term" value="F:pyridoxal phosphate binding"/>
    <property type="evidence" value="ECO:0007669"/>
    <property type="project" value="UniProtKB-UniRule"/>
</dbReference>
<dbReference type="GO" id="GO:0030632">
    <property type="term" value="P:D-alanine biosynthetic process"/>
    <property type="evidence" value="ECO:0007669"/>
    <property type="project" value="UniProtKB-UniRule"/>
</dbReference>
<dbReference type="GO" id="GO:0009252">
    <property type="term" value="P:peptidoglycan biosynthetic process"/>
    <property type="evidence" value="ECO:0007669"/>
    <property type="project" value="TreeGrafter"/>
</dbReference>
<dbReference type="CDD" id="cd00430">
    <property type="entry name" value="PLPDE_III_AR"/>
    <property type="match status" value="1"/>
</dbReference>
<dbReference type="FunFam" id="2.40.37.10:FF:000015">
    <property type="entry name" value="Alanine racemase"/>
    <property type="match status" value="1"/>
</dbReference>
<dbReference type="FunFam" id="3.20.20.10:FF:000002">
    <property type="entry name" value="Alanine racemase"/>
    <property type="match status" value="1"/>
</dbReference>
<dbReference type="Gene3D" id="3.20.20.10">
    <property type="entry name" value="Alanine racemase"/>
    <property type="match status" value="1"/>
</dbReference>
<dbReference type="Gene3D" id="2.40.37.10">
    <property type="entry name" value="Lyase, Ornithine Decarboxylase, Chain A, domain 1"/>
    <property type="match status" value="1"/>
</dbReference>
<dbReference type="HAMAP" id="MF_01201">
    <property type="entry name" value="Ala_racemase"/>
    <property type="match status" value="1"/>
</dbReference>
<dbReference type="InterPro" id="IPR000821">
    <property type="entry name" value="Ala_racemase"/>
</dbReference>
<dbReference type="InterPro" id="IPR009006">
    <property type="entry name" value="Ala_racemase/Decarboxylase_C"/>
</dbReference>
<dbReference type="InterPro" id="IPR011079">
    <property type="entry name" value="Ala_racemase_C"/>
</dbReference>
<dbReference type="InterPro" id="IPR001608">
    <property type="entry name" value="Ala_racemase_N"/>
</dbReference>
<dbReference type="InterPro" id="IPR020622">
    <property type="entry name" value="Ala_racemase_pyridoxalP-BS"/>
</dbReference>
<dbReference type="InterPro" id="IPR029066">
    <property type="entry name" value="PLP-binding_barrel"/>
</dbReference>
<dbReference type="NCBIfam" id="TIGR00492">
    <property type="entry name" value="alr"/>
    <property type="match status" value="1"/>
</dbReference>
<dbReference type="PANTHER" id="PTHR30511">
    <property type="entry name" value="ALANINE RACEMASE"/>
    <property type="match status" value="1"/>
</dbReference>
<dbReference type="PANTHER" id="PTHR30511:SF0">
    <property type="entry name" value="ALANINE RACEMASE, CATABOLIC-RELATED"/>
    <property type="match status" value="1"/>
</dbReference>
<dbReference type="Pfam" id="PF00842">
    <property type="entry name" value="Ala_racemase_C"/>
    <property type="match status" value="1"/>
</dbReference>
<dbReference type="Pfam" id="PF01168">
    <property type="entry name" value="Ala_racemase_N"/>
    <property type="match status" value="1"/>
</dbReference>
<dbReference type="PRINTS" id="PR00992">
    <property type="entry name" value="ALARACEMASE"/>
</dbReference>
<dbReference type="SMART" id="SM01005">
    <property type="entry name" value="Ala_racemase_C"/>
    <property type="match status" value="1"/>
</dbReference>
<dbReference type="SUPFAM" id="SSF50621">
    <property type="entry name" value="Alanine racemase C-terminal domain-like"/>
    <property type="match status" value="1"/>
</dbReference>
<dbReference type="SUPFAM" id="SSF51419">
    <property type="entry name" value="PLP-binding barrel"/>
    <property type="match status" value="1"/>
</dbReference>
<dbReference type="PROSITE" id="PS00395">
    <property type="entry name" value="ALANINE_RACEMASE"/>
    <property type="match status" value="1"/>
</dbReference>
<sequence length="389" mass="41056">MQTTEPMTPPAPLASAQTVIDLGAIDHNVRVLRELAGSADVMAVVKADAYGHGALPVARTALAAGAAALGVATIPEALALREGGITAPVLAWLHPPGTDFAPAIAADVEVAVSSRRQLEQVTAAAAEVGRTATVTVKVDTGLSRNGVGAADYPEVLDVLRRAQADGAIRVRGLMSHLVHGDDPENPFNGLQGQRLADMRVYAREHGVDYEVAHLCNSPAAMTRPDLAFEMVRPGISLYGLSPIPERGDMGLRPAMTLKCPVALVRSVHAGDGVSYGHRWVADRDTTLGLLPIGYADGVYRALSGRIDVLIKGRRRRAVGRICMDQFVVDLGPDADDVAVGDDAILFGPGANGEPTAQDWAELLDTIHYEVVTSPRGRVTRTYLPAGQQD</sequence>
<accession>A0QSR6</accession>
<accession>I7F8X0</accession>
<feature type="chain" id="PRO_1000066012" description="Alanine racemase">
    <location>
        <begin position="1"/>
        <end position="389"/>
    </location>
</feature>
<feature type="active site" description="Proton acceptor; specific for D-alanine" evidence="1">
    <location>
        <position position="46"/>
    </location>
</feature>
<feature type="active site" description="Proton acceptor; specific for L-alanine" evidence="1">
    <location>
        <position position="275"/>
    </location>
</feature>
<feature type="binding site" evidence="1">
    <location>
        <position position="144"/>
    </location>
    <ligand>
        <name>substrate</name>
    </ligand>
</feature>
<feature type="binding site" evidence="1">
    <location>
        <position position="323"/>
    </location>
    <ligand>
        <name>substrate</name>
    </ligand>
</feature>
<feature type="modified residue" description="N6-(pyridoxal phosphate)lysine" evidence="1">
    <location>
        <position position="46"/>
    </location>
</feature>
<gene>
    <name type="primary">alr</name>
    <name type="ordered locus">MSMEG_1575</name>
    <name type="ordered locus">MSMEI_1537</name>
</gene>
<proteinExistence type="inferred from homology"/>
<evidence type="ECO:0000255" key="1">
    <source>
        <dbReference type="HAMAP-Rule" id="MF_01201"/>
    </source>
</evidence>
<comment type="function">
    <text evidence="1">Catalyzes the interconversion of L-alanine and D-alanine. May also act on other amino acids.</text>
</comment>
<comment type="catalytic activity">
    <reaction evidence="1">
        <text>L-alanine = D-alanine</text>
        <dbReference type="Rhea" id="RHEA:20249"/>
        <dbReference type="ChEBI" id="CHEBI:57416"/>
        <dbReference type="ChEBI" id="CHEBI:57972"/>
        <dbReference type="EC" id="5.1.1.1"/>
    </reaction>
</comment>
<comment type="cofactor">
    <cofactor evidence="1">
        <name>pyridoxal 5'-phosphate</name>
        <dbReference type="ChEBI" id="CHEBI:597326"/>
    </cofactor>
</comment>
<comment type="pathway">
    <text evidence="1">Amino-acid biosynthesis; D-alanine biosynthesis; D-alanine from L-alanine: step 1/1.</text>
</comment>
<comment type="similarity">
    <text evidence="1">Belongs to the alanine racemase family.</text>
</comment>
<protein>
    <recommendedName>
        <fullName evidence="1">Alanine racemase</fullName>
        <ecNumber evidence="1">5.1.1.1</ecNumber>
    </recommendedName>
</protein>
<name>ALR_MYCS2</name>
<organism>
    <name type="scientific">Mycolicibacterium smegmatis (strain ATCC 700084 / mc(2)155)</name>
    <name type="common">Mycobacterium smegmatis</name>
    <dbReference type="NCBI Taxonomy" id="246196"/>
    <lineage>
        <taxon>Bacteria</taxon>
        <taxon>Bacillati</taxon>
        <taxon>Actinomycetota</taxon>
        <taxon>Actinomycetes</taxon>
        <taxon>Mycobacteriales</taxon>
        <taxon>Mycobacteriaceae</taxon>
        <taxon>Mycolicibacterium</taxon>
    </lineage>
</organism>
<reference key="1">
    <citation type="submission" date="2006-10" db="EMBL/GenBank/DDBJ databases">
        <authorList>
            <person name="Fleischmann R.D."/>
            <person name="Dodson R.J."/>
            <person name="Haft D.H."/>
            <person name="Merkel J.S."/>
            <person name="Nelson W.C."/>
            <person name="Fraser C.M."/>
        </authorList>
    </citation>
    <scope>NUCLEOTIDE SEQUENCE [LARGE SCALE GENOMIC DNA]</scope>
    <source>
        <strain>ATCC 700084 / mc(2)155</strain>
    </source>
</reference>
<reference key="2">
    <citation type="journal article" date="2007" name="Genome Biol.">
        <title>Interrupted coding sequences in Mycobacterium smegmatis: authentic mutations or sequencing errors?</title>
        <authorList>
            <person name="Deshayes C."/>
            <person name="Perrodou E."/>
            <person name="Gallien S."/>
            <person name="Euphrasie D."/>
            <person name="Schaeffer C."/>
            <person name="Van-Dorsselaer A."/>
            <person name="Poch O."/>
            <person name="Lecompte O."/>
            <person name="Reyrat J.-M."/>
        </authorList>
    </citation>
    <scope>NUCLEOTIDE SEQUENCE [LARGE SCALE GENOMIC DNA]</scope>
    <source>
        <strain>ATCC 700084 / mc(2)155</strain>
    </source>
</reference>
<reference key="3">
    <citation type="journal article" date="2009" name="Genome Res.">
        <title>Ortho-proteogenomics: multiple proteomes investigation through orthology and a new MS-based protocol.</title>
        <authorList>
            <person name="Gallien S."/>
            <person name="Perrodou E."/>
            <person name="Carapito C."/>
            <person name="Deshayes C."/>
            <person name="Reyrat J.-M."/>
            <person name="Van Dorsselaer A."/>
            <person name="Poch O."/>
            <person name="Schaeffer C."/>
            <person name="Lecompte O."/>
        </authorList>
    </citation>
    <scope>NUCLEOTIDE SEQUENCE [LARGE SCALE GENOMIC DNA]</scope>
    <source>
        <strain>ATCC 700084 / mc(2)155</strain>
    </source>
</reference>
<keyword id="KW-0413">Isomerase</keyword>
<keyword id="KW-0663">Pyridoxal phosphate</keyword>
<keyword id="KW-1185">Reference proteome</keyword>